<protein>
    <recommendedName>
        <fullName evidence="1">Holo-[acyl-carrier-protein] synthase</fullName>
        <shortName evidence="1">Holo-ACP synthase</shortName>
        <ecNumber evidence="1">2.7.8.7</ecNumber>
    </recommendedName>
    <alternativeName>
        <fullName evidence="1">4'-phosphopantetheinyl transferase AcpS</fullName>
    </alternativeName>
</protein>
<gene>
    <name evidence="1" type="primary">acpS</name>
    <name type="ordered locus">CFF8240_0921</name>
</gene>
<organism>
    <name type="scientific">Campylobacter fetus subsp. fetus (strain 82-40)</name>
    <dbReference type="NCBI Taxonomy" id="360106"/>
    <lineage>
        <taxon>Bacteria</taxon>
        <taxon>Pseudomonadati</taxon>
        <taxon>Campylobacterota</taxon>
        <taxon>Epsilonproteobacteria</taxon>
        <taxon>Campylobacterales</taxon>
        <taxon>Campylobacteraceae</taxon>
        <taxon>Campylobacter</taxon>
    </lineage>
</organism>
<keyword id="KW-0963">Cytoplasm</keyword>
<keyword id="KW-0275">Fatty acid biosynthesis</keyword>
<keyword id="KW-0276">Fatty acid metabolism</keyword>
<keyword id="KW-0444">Lipid biosynthesis</keyword>
<keyword id="KW-0443">Lipid metabolism</keyword>
<keyword id="KW-0460">Magnesium</keyword>
<keyword id="KW-0479">Metal-binding</keyword>
<keyword id="KW-0808">Transferase</keyword>
<sequence length="115" mass="12437">MIGIDIVKIDRVTSAKSKFKSKFIYKFLLSSEVALVKNDASLAGIWAAKEAASKALGCGIGAELSFLDIEIYKDKKGAPKLKFNENIVKKFNIKNTSLSITHDGGFAIAAVIVEN</sequence>
<comment type="function">
    <text evidence="1">Transfers the 4'-phosphopantetheine moiety from coenzyme A to a Ser of acyl-carrier-protein.</text>
</comment>
<comment type="catalytic activity">
    <reaction evidence="1">
        <text>apo-[ACP] + CoA = holo-[ACP] + adenosine 3',5'-bisphosphate + H(+)</text>
        <dbReference type="Rhea" id="RHEA:12068"/>
        <dbReference type="Rhea" id="RHEA-COMP:9685"/>
        <dbReference type="Rhea" id="RHEA-COMP:9690"/>
        <dbReference type="ChEBI" id="CHEBI:15378"/>
        <dbReference type="ChEBI" id="CHEBI:29999"/>
        <dbReference type="ChEBI" id="CHEBI:57287"/>
        <dbReference type="ChEBI" id="CHEBI:58343"/>
        <dbReference type="ChEBI" id="CHEBI:64479"/>
        <dbReference type="EC" id="2.7.8.7"/>
    </reaction>
</comment>
<comment type="cofactor">
    <cofactor evidence="1">
        <name>Mg(2+)</name>
        <dbReference type="ChEBI" id="CHEBI:18420"/>
    </cofactor>
</comment>
<comment type="subcellular location">
    <subcellularLocation>
        <location evidence="1">Cytoplasm</location>
    </subcellularLocation>
</comment>
<comment type="similarity">
    <text evidence="1">Belongs to the P-Pant transferase superfamily. AcpS family.</text>
</comment>
<evidence type="ECO:0000255" key="1">
    <source>
        <dbReference type="HAMAP-Rule" id="MF_00101"/>
    </source>
</evidence>
<proteinExistence type="inferred from homology"/>
<dbReference type="EC" id="2.7.8.7" evidence="1"/>
<dbReference type="EMBL" id="CP000487">
    <property type="protein sequence ID" value="ABK82985.1"/>
    <property type="molecule type" value="Genomic_DNA"/>
</dbReference>
<dbReference type="RefSeq" id="WP_002849445.1">
    <property type="nucleotide sequence ID" value="NC_008599.1"/>
</dbReference>
<dbReference type="SMR" id="A0RPF9"/>
<dbReference type="GeneID" id="61064754"/>
<dbReference type="KEGG" id="cff:CFF8240_0921"/>
<dbReference type="eggNOG" id="COG0736">
    <property type="taxonomic scope" value="Bacteria"/>
</dbReference>
<dbReference type="HOGENOM" id="CLU_089696_0_2_7"/>
<dbReference type="Proteomes" id="UP000000760">
    <property type="component" value="Chromosome"/>
</dbReference>
<dbReference type="GO" id="GO:0005737">
    <property type="term" value="C:cytoplasm"/>
    <property type="evidence" value="ECO:0007669"/>
    <property type="project" value="UniProtKB-SubCell"/>
</dbReference>
<dbReference type="GO" id="GO:0008897">
    <property type="term" value="F:holo-[acyl-carrier-protein] synthase activity"/>
    <property type="evidence" value="ECO:0007669"/>
    <property type="project" value="UniProtKB-UniRule"/>
</dbReference>
<dbReference type="GO" id="GO:0000287">
    <property type="term" value="F:magnesium ion binding"/>
    <property type="evidence" value="ECO:0007669"/>
    <property type="project" value="UniProtKB-UniRule"/>
</dbReference>
<dbReference type="GO" id="GO:0006633">
    <property type="term" value="P:fatty acid biosynthetic process"/>
    <property type="evidence" value="ECO:0007669"/>
    <property type="project" value="UniProtKB-UniRule"/>
</dbReference>
<dbReference type="Gene3D" id="3.90.470.20">
    <property type="entry name" value="4'-phosphopantetheinyl transferase domain"/>
    <property type="match status" value="1"/>
</dbReference>
<dbReference type="HAMAP" id="MF_00101">
    <property type="entry name" value="AcpS"/>
    <property type="match status" value="1"/>
</dbReference>
<dbReference type="InterPro" id="IPR008278">
    <property type="entry name" value="4-PPantetheinyl_Trfase_dom"/>
</dbReference>
<dbReference type="InterPro" id="IPR037143">
    <property type="entry name" value="4-PPantetheinyl_Trfase_dom_sf"/>
</dbReference>
<dbReference type="InterPro" id="IPR002582">
    <property type="entry name" value="ACPS"/>
</dbReference>
<dbReference type="InterPro" id="IPR004568">
    <property type="entry name" value="Ppantetheine-prot_Trfase_dom"/>
</dbReference>
<dbReference type="NCBIfam" id="TIGR00516">
    <property type="entry name" value="acpS"/>
    <property type="match status" value="1"/>
</dbReference>
<dbReference type="NCBIfam" id="TIGR00556">
    <property type="entry name" value="pantethn_trn"/>
    <property type="match status" value="1"/>
</dbReference>
<dbReference type="Pfam" id="PF01648">
    <property type="entry name" value="ACPS"/>
    <property type="match status" value="1"/>
</dbReference>
<dbReference type="SUPFAM" id="SSF56214">
    <property type="entry name" value="4'-phosphopantetheinyl transferase"/>
    <property type="match status" value="1"/>
</dbReference>
<accession>A0RPF9</accession>
<name>ACPS_CAMFF</name>
<feature type="chain" id="PRO_1000008407" description="Holo-[acyl-carrier-protein] synthase">
    <location>
        <begin position="1"/>
        <end position="115"/>
    </location>
</feature>
<feature type="binding site" evidence="1">
    <location>
        <position position="5"/>
    </location>
    <ligand>
        <name>Mg(2+)</name>
        <dbReference type="ChEBI" id="CHEBI:18420"/>
    </ligand>
</feature>
<feature type="binding site" evidence="1">
    <location>
        <position position="50"/>
    </location>
    <ligand>
        <name>Mg(2+)</name>
        <dbReference type="ChEBI" id="CHEBI:18420"/>
    </ligand>
</feature>
<reference key="1">
    <citation type="submission" date="2006-11" db="EMBL/GenBank/DDBJ databases">
        <title>Sequence of Campylobacter fetus subsp. fetus 82-40.</title>
        <authorList>
            <person name="Fouts D.E."/>
            <person name="Nelson K.E."/>
        </authorList>
    </citation>
    <scope>NUCLEOTIDE SEQUENCE [LARGE SCALE GENOMIC DNA]</scope>
    <source>
        <strain>82-40</strain>
    </source>
</reference>